<sequence length="1012" mass="108499">MGSGGTGLLGTEWPLPLLLLFIMGGEALDSPPQILVHPQDQLLQGSGPAKMRCRSSGQPPPTIRWLLNGQPLSMATPDLHYLLPDGTLLLHRPSVQGRPQDDQNILSAILGVYTCEASNRLGTAVSRGARLSVAVLQEDFQIQPRDTVAVVGESLVLECGPPWGYPKPSVSWWKDGKPLVLQPGRRTVSGDSLMVSRAEKNDSGTYMCMATNNAGQRESRAARVSIQESQDHKEHLELLAVRIQLENVTLLNPEPVKGPKPGPSVWLSWKVSGPAAPAESYTALFRTQRSPRDQGSPWTEVLLRGLQSAKLGGLHWGQDYEFKVRPSSGRARGPDSNVLLLRLPEQVPSAPPQGVTLRSGNGSVFVSWAPPPAESHNGVIRGYQVWSLGNASLPAANWTVVGEQTQLEIATRLPGSYCVQVAAVTGAGAGELSTPVCLLLEQAMEQSARDPRKHVPWTLEQLRATLRRPEVIASSAVLLWLLLLGITVCIYRRRKAGVHLGPGLYRYTSEDAILKHRMDHSDSPWLADTWRSTSGSRDLSSSSSLSSRLGLDPRDPLEGRRSLISWDPRSPGVPLLPDTSTFYGSLIAEQPSSPPVRPSPKTPAARRFPSKLAGTSSPWASSDSLCSRRGLCSPRMSLTPTEAWKAKKKQELHQANSSPLLRGSHPMEIWAWELGSRASKNLSQSPGPNSGSPGEAPRAVVSWRAVGPQLHRNSSELASRPLPPTPLSLRGASSHDPQSQCVEKLQAPSSDPLPAAPLSVLNSSRPSSPQASFLSCPSPSSSNLSSSSLSSLEEEEDQDSVLTPEEVALCLELSDGEETPTNSVSPMPRAPSPPTTYGYISIPTCSGLADMGRAGGGVGSEVGNLLYPPRPCPTPTPSEGSLANGWGSASEDNVPSARASLVSSSDGSFLADTHFARALAVAVDSFGLSLDPREADCVFTDASSPPSPRGDLSLTRSFSLPLWEWRPDWLEDAEISHTQRLGRGLPPWPPDSRASSQRSWLTGAVPKAGDSS</sequence>
<comment type="function">
    <text evidence="1 6">Receptor for Slit proteins, at least for SLIT2, and seems to be involved in angiogenesis and vascular patterning. May mediate the inhibition of primary endothelial cell migration by Slit proteins. Involved in the maintenance of endothelial barrier organization and function (By similarity).</text>
</comment>
<comment type="subunit">
    <text evidence="6">Interacts with SLIT2 and ENAH.</text>
</comment>
<comment type="alternative products">
    <event type="alternative splicing"/>
    <isoform>
        <id>Q8C310-1</id>
        <name>1</name>
        <sequence type="displayed"/>
    </isoform>
    <isoform>
        <id>Q8C310-2</id>
        <name>2</name>
        <sequence type="described" ref="VSP_010662"/>
    </isoform>
    <isoform>
        <id>Q8C310-3</id>
        <name>3</name>
        <sequence type="described" ref="VSP_010663 VSP_010662"/>
    </isoform>
</comment>
<comment type="tissue specificity">
    <text evidence="6">Expressed specifically in embryo and adult vascular endothelium.</text>
</comment>
<comment type="developmental stage">
    <text evidence="6 7">In embryonic development of vascular endothelium, it shows a dynamic expression pattern within vessels, with expression starting in the larger axial vessels and intersomitic vessels at earlier ages, and changing to intersomitic vessel and capillary expression at later stages. At 9.0 dpc, is expressed in the central vessels, the dorsal aorta, and intersomitic vessels. At 9.5 dpc, is highly expressed in intersomitic vessels with little expression remaining in dorsal aortae. By 10.0 dpc, is detected in capillary vessels, the capillary plexus of the limb buds, and throughout the endothelium as microvessels sprout from the dorsal aortae. No expression was detected in the neural tube at 9.0 dpc and 9.5 dpc. However, it is detected within the capillaries sprouting into the neural tube, as well as in the adjacent perineural capillary plexus at 10.0 dpc. At 11.5 dpc, it is expressed in the endocardial layer of the cushions and delamination zones. By 17 dpc, it is detected in both the endothelial and interstitial cells of the developing aortic valve and endothelial cells of the proximal aorta. At 5 weeks after birth, it is localized to the endothelial layer of the ascending aorta and persists throughout postnatal development (PubMed:30455415).</text>
</comment>
<comment type="disruption phenotype">
    <text evidence="7">Homozygous knockout mice exhibit a complex cardiovascular phenotype that includes a combination of aortic valve thickening with or without bicuspid aortic valve, aortic valve stenosis, regurgitation and/or ascending aortic aneurysm. In general, these phenotypes are observed with low penetrance and male predominance.</text>
</comment>
<comment type="similarity">
    <text evidence="10">Belongs to the immunoglobulin superfamily. ROBO family.</text>
</comment>
<comment type="sequence caution" evidence="10">
    <conflict type="erroneous initiation">
        <sequence resource="EMBL-CDS" id="AAH20129"/>
    </conflict>
</comment>
<comment type="sequence caution" evidence="10">
    <conflict type="erroneous initiation">
        <sequence resource="EMBL-CDS" id="BAB23506"/>
    </conflict>
</comment>
<comment type="sequence caution" evidence="10">
    <molecule>Isoform 2</molecule>
    <conflict type="erroneous initiation">
        <sequence resource="EMBL-CDS" id="AAH20129"/>
    </conflict>
    <text>Extended N-terminus.</text>
</comment>
<comment type="sequence caution" evidence="10">
    <molecule>Isoform 2</molecule>
    <conflict type="erroneous initiation">
        <sequence resource="EMBL-CDS" id="BAB23506"/>
    </conflict>
    <text>Truncated N-terminus.</text>
</comment>
<comment type="sequence caution" evidence="10">
    <molecule>Isoform 3</molecule>
    <conflict type="erroneous initiation">
        <sequence resource="EMBL-CDS" id="BAC39850"/>
    </conflict>
    <text>Extended N-terminus.</text>
</comment>
<comment type="sequence caution" evidence="10">
    <molecule>Isoform 3</molecule>
    <conflict type="frameshift">
        <sequence resource="EMBL-CDS" id="BAC39850"/>
    </conflict>
</comment>
<organism>
    <name type="scientific">Mus musculus</name>
    <name type="common">Mouse</name>
    <dbReference type="NCBI Taxonomy" id="10090"/>
    <lineage>
        <taxon>Eukaryota</taxon>
        <taxon>Metazoa</taxon>
        <taxon>Chordata</taxon>
        <taxon>Craniata</taxon>
        <taxon>Vertebrata</taxon>
        <taxon>Euteleostomi</taxon>
        <taxon>Mammalia</taxon>
        <taxon>Eutheria</taxon>
        <taxon>Euarchontoglires</taxon>
        <taxon>Glires</taxon>
        <taxon>Rodentia</taxon>
        <taxon>Myomorpha</taxon>
        <taxon>Muroidea</taxon>
        <taxon>Muridae</taxon>
        <taxon>Murinae</taxon>
        <taxon>Mus</taxon>
        <taxon>Mus</taxon>
    </lineage>
</organism>
<name>ROBO4_MOUSE</name>
<proteinExistence type="evidence at protein level"/>
<accession>Q8C310</accession>
<accession>Q9DBW1</accession>
<reference key="1">
    <citation type="journal article" date="2003" name="Dev. Biol.">
        <title>Robo4 is a vascular-specific receptor that inhibits endothelial migration.</title>
        <authorList>
            <person name="Park K.W."/>
            <person name="Morrison C.M."/>
            <person name="Sorensen L.K."/>
            <person name="Jones C.A."/>
            <person name="Rao Y."/>
            <person name="Chien C.-B."/>
            <person name="Wu J.Y."/>
            <person name="Urness L.D."/>
            <person name="Li D.Y."/>
        </authorList>
    </citation>
    <scope>NUCLEOTIDE SEQUENCE [MRNA] (ISOFORM 1)</scope>
    <scope>FUNCTION</scope>
    <scope>INTERACTION WITH SLIT2 AND ENAH</scope>
    <scope>TISSUE SPECIFICITY</scope>
    <scope>DEVELOPMENTAL STAGE</scope>
    <source>
        <strain>FVB/N</strain>
    </source>
</reference>
<reference key="2">
    <citation type="journal article" date="2005" name="Science">
        <title>The transcriptional landscape of the mammalian genome.</title>
        <authorList>
            <person name="Carninci P."/>
            <person name="Kasukawa T."/>
            <person name="Katayama S."/>
            <person name="Gough J."/>
            <person name="Frith M.C."/>
            <person name="Maeda N."/>
            <person name="Oyama R."/>
            <person name="Ravasi T."/>
            <person name="Lenhard B."/>
            <person name="Wells C."/>
            <person name="Kodzius R."/>
            <person name="Shimokawa K."/>
            <person name="Bajic V.B."/>
            <person name="Brenner S.E."/>
            <person name="Batalov S."/>
            <person name="Forrest A.R."/>
            <person name="Zavolan M."/>
            <person name="Davis M.J."/>
            <person name="Wilming L.G."/>
            <person name="Aidinis V."/>
            <person name="Allen J.E."/>
            <person name="Ambesi-Impiombato A."/>
            <person name="Apweiler R."/>
            <person name="Aturaliya R.N."/>
            <person name="Bailey T.L."/>
            <person name="Bansal M."/>
            <person name="Baxter L."/>
            <person name="Beisel K.W."/>
            <person name="Bersano T."/>
            <person name="Bono H."/>
            <person name="Chalk A.M."/>
            <person name="Chiu K.P."/>
            <person name="Choudhary V."/>
            <person name="Christoffels A."/>
            <person name="Clutterbuck D.R."/>
            <person name="Crowe M.L."/>
            <person name="Dalla E."/>
            <person name="Dalrymple B.P."/>
            <person name="de Bono B."/>
            <person name="Della Gatta G."/>
            <person name="di Bernardo D."/>
            <person name="Down T."/>
            <person name="Engstrom P."/>
            <person name="Fagiolini M."/>
            <person name="Faulkner G."/>
            <person name="Fletcher C.F."/>
            <person name="Fukushima T."/>
            <person name="Furuno M."/>
            <person name="Futaki S."/>
            <person name="Gariboldi M."/>
            <person name="Georgii-Hemming P."/>
            <person name="Gingeras T.R."/>
            <person name="Gojobori T."/>
            <person name="Green R.E."/>
            <person name="Gustincich S."/>
            <person name="Harbers M."/>
            <person name="Hayashi Y."/>
            <person name="Hensch T.K."/>
            <person name="Hirokawa N."/>
            <person name="Hill D."/>
            <person name="Huminiecki L."/>
            <person name="Iacono M."/>
            <person name="Ikeo K."/>
            <person name="Iwama A."/>
            <person name="Ishikawa T."/>
            <person name="Jakt M."/>
            <person name="Kanapin A."/>
            <person name="Katoh M."/>
            <person name="Kawasawa Y."/>
            <person name="Kelso J."/>
            <person name="Kitamura H."/>
            <person name="Kitano H."/>
            <person name="Kollias G."/>
            <person name="Krishnan S.P."/>
            <person name="Kruger A."/>
            <person name="Kummerfeld S.K."/>
            <person name="Kurochkin I.V."/>
            <person name="Lareau L.F."/>
            <person name="Lazarevic D."/>
            <person name="Lipovich L."/>
            <person name="Liu J."/>
            <person name="Liuni S."/>
            <person name="McWilliam S."/>
            <person name="Madan Babu M."/>
            <person name="Madera M."/>
            <person name="Marchionni L."/>
            <person name="Matsuda H."/>
            <person name="Matsuzawa S."/>
            <person name="Miki H."/>
            <person name="Mignone F."/>
            <person name="Miyake S."/>
            <person name="Morris K."/>
            <person name="Mottagui-Tabar S."/>
            <person name="Mulder N."/>
            <person name="Nakano N."/>
            <person name="Nakauchi H."/>
            <person name="Ng P."/>
            <person name="Nilsson R."/>
            <person name="Nishiguchi S."/>
            <person name="Nishikawa S."/>
            <person name="Nori F."/>
            <person name="Ohara O."/>
            <person name="Okazaki Y."/>
            <person name="Orlando V."/>
            <person name="Pang K.C."/>
            <person name="Pavan W.J."/>
            <person name="Pavesi G."/>
            <person name="Pesole G."/>
            <person name="Petrovsky N."/>
            <person name="Piazza S."/>
            <person name="Reed J."/>
            <person name="Reid J.F."/>
            <person name="Ring B.Z."/>
            <person name="Ringwald M."/>
            <person name="Rost B."/>
            <person name="Ruan Y."/>
            <person name="Salzberg S.L."/>
            <person name="Sandelin A."/>
            <person name="Schneider C."/>
            <person name="Schoenbach C."/>
            <person name="Sekiguchi K."/>
            <person name="Semple C.A."/>
            <person name="Seno S."/>
            <person name="Sessa L."/>
            <person name="Sheng Y."/>
            <person name="Shibata Y."/>
            <person name="Shimada H."/>
            <person name="Shimada K."/>
            <person name="Silva D."/>
            <person name="Sinclair B."/>
            <person name="Sperling S."/>
            <person name="Stupka E."/>
            <person name="Sugiura K."/>
            <person name="Sultana R."/>
            <person name="Takenaka Y."/>
            <person name="Taki K."/>
            <person name="Tammoja K."/>
            <person name="Tan S.L."/>
            <person name="Tang S."/>
            <person name="Taylor M.S."/>
            <person name="Tegner J."/>
            <person name="Teichmann S.A."/>
            <person name="Ueda H.R."/>
            <person name="van Nimwegen E."/>
            <person name="Verardo R."/>
            <person name="Wei C.L."/>
            <person name="Yagi K."/>
            <person name="Yamanishi H."/>
            <person name="Zabarovsky E."/>
            <person name="Zhu S."/>
            <person name="Zimmer A."/>
            <person name="Hide W."/>
            <person name="Bult C."/>
            <person name="Grimmond S.M."/>
            <person name="Teasdale R.D."/>
            <person name="Liu E.T."/>
            <person name="Brusic V."/>
            <person name="Quackenbush J."/>
            <person name="Wahlestedt C."/>
            <person name="Mattick J.S."/>
            <person name="Hume D.A."/>
            <person name="Kai C."/>
            <person name="Sasaki D."/>
            <person name="Tomaru Y."/>
            <person name="Fukuda S."/>
            <person name="Kanamori-Katayama M."/>
            <person name="Suzuki M."/>
            <person name="Aoki J."/>
            <person name="Arakawa T."/>
            <person name="Iida J."/>
            <person name="Imamura K."/>
            <person name="Itoh M."/>
            <person name="Kato T."/>
            <person name="Kawaji H."/>
            <person name="Kawagashira N."/>
            <person name="Kawashima T."/>
            <person name="Kojima M."/>
            <person name="Kondo S."/>
            <person name="Konno H."/>
            <person name="Nakano K."/>
            <person name="Ninomiya N."/>
            <person name="Nishio T."/>
            <person name="Okada M."/>
            <person name="Plessy C."/>
            <person name="Shibata K."/>
            <person name="Shiraki T."/>
            <person name="Suzuki S."/>
            <person name="Tagami M."/>
            <person name="Waki K."/>
            <person name="Watahiki A."/>
            <person name="Okamura-Oho Y."/>
            <person name="Suzuki H."/>
            <person name="Kawai J."/>
            <person name="Hayashizaki Y."/>
        </authorList>
    </citation>
    <scope>NUCLEOTIDE SEQUENCE [LARGE SCALE MRNA] (ISOFORMS 2 AND 3)</scope>
    <source>
        <strain>C57BL/6J</strain>
        <tissue>Lung</tissue>
    </source>
</reference>
<reference key="3">
    <citation type="journal article" date="2004" name="Genome Res.">
        <title>The status, quality, and expansion of the NIH full-length cDNA project: the Mammalian Gene Collection (MGC).</title>
        <authorList>
            <consortium name="The MGC Project Team"/>
        </authorList>
    </citation>
    <scope>NUCLEOTIDE SEQUENCE [LARGE SCALE MRNA] OF 475-1012 (ISOFORM 2)</scope>
</reference>
<reference key="4">
    <citation type="journal article" date="2010" name="Cell">
        <title>A tissue-specific atlas of mouse protein phosphorylation and expression.</title>
        <authorList>
            <person name="Huttlin E.L."/>
            <person name="Jedrychowski M.P."/>
            <person name="Elias J.E."/>
            <person name="Goswami T."/>
            <person name="Rad R."/>
            <person name="Beausoleil S.A."/>
            <person name="Villen J."/>
            <person name="Haas W."/>
            <person name="Sowa M.E."/>
            <person name="Gygi S.P."/>
        </authorList>
    </citation>
    <scope>PHOSPHORYLATION [LARGE SCALE ANALYSIS] AT SER-947</scope>
    <scope>IDENTIFICATION BY MASS SPECTROMETRY [LARGE SCALE ANALYSIS]</scope>
    <source>
        <tissue>Brown adipose tissue</tissue>
        <tissue>Lung</tissue>
    </source>
</reference>
<reference key="5">
    <citation type="journal article" date="2019" name="Nat. Genet.">
        <title>ROBO4 variants predispose individuals to bicuspid aortic valve and thoracic aortic aneurysm.</title>
        <authorList>
            <consortium name="Baylor-Hopkins Center for Mendelian Genomics"/>
            <consortium name="MIBAVA Leducq Consortium"/>
            <person name="Gould R.A."/>
            <person name="Aziz H."/>
            <person name="Woods C.E."/>
            <person name="Seman-Senderos M.A."/>
            <person name="Sparks E."/>
            <person name="Preuss C."/>
            <person name="Wuennemann F."/>
            <person name="Bedja D."/>
            <person name="Moats C.R."/>
            <person name="McClymont S.A."/>
            <person name="Rose R."/>
            <person name="Sobreira N."/>
            <person name="Ling H."/>
            <person name="MacCarrick G."/>
            <person name="Kumar A.A."/>
            <person name="Luyckx I."/>
            <person name="Cannaerts E."/>
            <person name="Verstraeten A."/>
            <person name="Bjoerk H.M."/>
            <person name="Lehsau A.C."/>
            <person name="Jaskula-Ranga V."/>
            <person name="Lauridsen H."/>
            <person name="Shah A.A."/>
            <person name="Bennett C.L."/>
            <person name="Ellinor P.T."/>
            <person name="Lin H."/>
            <person name="Isselbacher E.M."/>
            <person name="Lino Cardenas C.L."/>
            <person name="Butcher J.T."/>
            <person name="Hughes G.C."/>
            <person name="Lindsay M.E."/>
            <person name="Mertens L."/>
            <person name="Franco-Cereceda A."/>
            <person name="Verhagen J.M.A."/>
            <person name="Wessels M."/>
            <person name="Mohamed S.A."/>
            <person name="Eriksson P."/>
            <person name="Mital S."/>
            <person name="Van Laer L."/>
            <person name="Loeys B.L."/>
            <person name="Andelfinger G."/>
            <person name="McCallion A.S."/>
            <person name="Dietz H.C."/>
        </authorList>
    </citation>
    <scope>DEVELOPMENTAL STAGE</scope>
    <scope>DISRUPTION PHENOTYPE</scope>
</reference>
<gene>
    <name type="primary">Robo4</name>
</gene>
<feature type="signal peptide" evidence="2">
    <location>
        <begin position="1"/>
        <end position="27"/>
    </location>
</feature>
<feature type="chain" id="PRO_0000031041" description="Roundabout homolog 4">
    <location>
        <begin position="28"/>
        <end position="1012"/>
    </location>
</feature>
<feature type="domain" description="Ig-like C2-type 1">
    <location>
        <begin position="32"/>
        <end position="132"/>
    </location>
</feature>
<feature type="domain" description="Ig-like C2-type 2">
    <location>
        <begin position="138"/>
        <end position="225"/>
    </location>
</feature>
<feature type="domain" description="Fibronectin type-III 1" evidence="4">
    <location>
        <begin position="249"/>
        <end position="346"/>
    </location>
</feature>
<feature type="domain" description="Fibronectin type-III 2" evidence="4">
    <location>
        <begin position="348"/>
        <end position="443"/>
    </location>
</feature>
<feature type="region of interest" description="Disordered" evidence="5">
    <location>
        <begin position="533"/>
        <end position="553"/>
    </location>
</feature>
<feature type="region of interest" description="Disordered" evidence="5">
    <location>
        <begin position="586"/>
        <end position="616"/>
    </location>
</feature>
<feature type="region of interest" description="Disordered" evidence="5">
    <location>
        <begin position="711"/>
        <end position="801"/>
    </location>
</feature>
<feature type="region of interest" description="Disordered" evidence="5">
    <location>
        <begin position="980"/>
        <end position="1012"/>
    </location>
</feature>
<feature type="compositionally biased region" description="Low complexity" evidence="5">
    <location>
        <begin position="534"/>
        <end position="550"/>
    </location>
</feature>
<feature type="compositionally biased region" description="Pro residues" evidence="5">
    <location>
        <begin position="592"/>
        <end position="601"/>
    </location>
</feature>
<feature type="compositionally biased region" description="Low complexity" evidence="5">
    <location>
        <begin position="745"/>
        <end position="759"/>
    </location>
</feature>
<feature type="compositionally biased region" description="Polar residues" evidence="5">
    <location>
        <begin position="760"/>
        <end position="771"/>
    </location>
</feature>
<feature type="compositionally biased region" description="Low complexity" evidence="5">
    <location>
        <begin position="772"/>
        <end position="791"/>
    </location>
</feature>
<feature type="modified residue" description="Phosphoserine" evidence="1">
    <location>
        <position position="814"/>
    </location>
</feature>
<feature type="modified residue" description="Phosphoserine" evidence="11">
    <location>
        <position position="947"/>
    </location>
</feature>
<feature type="glycosylation site" description="N-linked (GlcNAc...) asparagine" evidence="2">
    <location>
        <position position="201"/>
    </location>
</feature>
<feature type="glycosylation site" description="N-linked (GlcNAc...) asparagine" evidence="2">
    <location>
        <position position="247"/>
    </location>
</feature>
<feature type="glycosylation site" description="N-linked (GlcNAc...) asparagine" evidence="2">
    <location>
        <position position="361"/>
    </location>
</feature>
<feature type="glycosylation site" description="N-linked (GlcNAc...) asparagine" evidence="2">
    <location>
        <position position="390"/>
    </location>
</feature>
<feature type="glycosylation site" description="N-linked (GlcNAc...) asparagine" evidence="2">
    <location>
        <position position="397"/>
    </location>
</feature>
<feature type="glycosylation site" description="N-linked (GlcNAc...) asparagine" evidence="2">
    <location>
        <position position="681"/>
    </location>
</feature>
<feature type="glycosylation site" description="N-linked (GlcNAc...) asparagine" evidence="2">
    <location>
        <position position="713"/>
    </location>
</feature>
<feature type="glycosylation site" description="N-linked (GlcNAc...) asparagine" evidence="2">
    <location>
        <position position="762"/>
    </location>
</feature>
<feature type="glycosylation site" description="N-linked (GlcNAc...) asparagine" evidence="2">
    <location>
        <position position="783"/>
    </location>
</feature>
<feature type="disulfide bond" evidence="3">
    <location>
        <begin position="53"/>
        <end position="115"/>
    </location>
</feature>
<feature type="disulfide bond" evidence="3">
    <location>
        <begin position="159"/>
        <end position="208"/>
    </location>
</feature>
<feature type="splice variant" id="VSP_010663" description="In isoform 3." evidence="9">
    <original>L</original>
    <variation>LGEGKALSISSTPPPCRPSVSQFLSYIFSSSLSCLLVPLTVPLALPLSSTSQT</variation>
    <location>
        <position position="440"/>
    </location>
</feature>
<feature type="splice variant" id="VSP_010662" description="In isoform 2 and isoform 3." evidence="8 9">
    <location>
        <begin position="688"/>
        <end position="694"/>
    </location>
</feature>
<keyword id="KW-0025">Alternative splicing</keyword>
<keyword id="KW-0037">Angiogenesis</keyword>
<keyword id="KW-0217">Developmental protein</keyword>
<keyword id="KW-0221">Differentiation</keyword>
<keyword id="KW-1015">Disulfide bond</keyword>
<keyword id="KW-0325">Glycoprotein</keyword>
<keyword id="KW-0393">Immunoglobulin domain</keyword>
<keyword id="KW-0597">Phosphoprotein</keyword>
<keyword id="KW-0675">Receptor</keyword>
<keyword id="KW-1185">Reference proteome</keyword>
<keyword id="KW-0677">Repeat</keyword>
<keyword id="KW-0732">Signal</keyword>
<dbReference type="EMBL" id="AF536772">
    <property type="protein sequence ID" value="AAQ10749.1"/>
    <property type="molecule type" value="mRNA"/>
</dbReference>
<dbReference type="EMBL" id="AK004723">
    <property type="protein sequence ID" value="BAB23506.2"/>
    <property type="status" value="ALT_INIT"/>
    <property type="molecule type" value="mRNA"/>
</dbReference>
<dbReference type="EMBL" id="AK087355">
    <property type="protein sequence ID" value="BAC39850.1"/>
    <property type="status" value="ALT_SEQ"/>
    <property type="molecule type" value="mRNA"/>
</dbReference>
<dbReference type="EMBL" id="BC020129">
    <property type="protein sequence ID" value="AAH20129.1"/>
    <property type="status" value="ALT_INIT"/>
    <property type="molecule type" value="mRNA"/>
</dbReference>
<dbReference type="CCDS" id="CCDS22977.1">
    <molecule id="Q8C310-2"/>
</dbReference>
<dbReference type="CCDS" id="CCDS80976.1">
    <molecule id="Q8C310-1"/>
</dbReference>
<dbReference type="RefSeq" id="NP_001296319.2">
    <molecule id="Q8C310-1"/>
    <property type="nucleotide sequence ID" value="NM_001309390.2"/>
</dbReference>
<dbReference type="RefSeq" id="NP_083059.2">
    <molecule id="Q8C310-2"/>
    <property type="nucleotide sequence ID" value="NM_028783.3"/>
</dbReference>
<dbReference type="SMR" id="Q8C310"/>
<dbReference type="BioGRID" id="216523">
    <property type="interactions" value="3"/>
</dbReference>
<dbReference type="FunCoup" id="Q8C310">
    <property type="interactions" value="198"/>
</dbReference>
<dbReference type="STRING" id="10090.ENSMUSP00000150722"/>
<dbReference type="GlyCosmos" id="Q8C310">
    <property type="glycosylation" value="9 sites, No reported glycans"/>
</dbReference>
<dbReference type="GlyGen" id="Q8C310">
    <property type="glycosylation" value="11 sites, 2 N-linked glycans (4 sites)"/>
</dbReference>
<dbReference type="iPTMnet" id="Q8C310"/>
<dbReference type="PhosphoSitePlus" id="Q8C310"/>
<dbReference type="jPOST" id="Q8C310"/>
<dbReference type="PaxDb" id="10090-ENSMUSP00000099959"/>
<dbReference type="ProteomicsDB" id="301637">
    <molecule id="Q8C310-1"/>
</dbReference>
<dbReference type="ProteomicsDB" id="301638">
    <molecule id="Q8C310-2"/>
</dbReference>
<dbReference type="ProteomicsDB" id="301639">
    <molecule id="Q8C310-3"/>
</dbReference>
<dbReference type="Antibodypedia" id="32921">
    <property type="antibodies" value="476 antibodies from 31 providers"/>
</dbReference>
<dbReference type="DNASU" id="74144"/>
<dbReference type="Ensembl" id="ENSMUST00000102895.7">
    <molecule id="Q8C310-2"/>
    <property type="protein sequence ID" value="ENSMUSP00000099959.6"/>
    <property type="gene ID" value="ENSMUSG00000032125.22"/>
</dbReference>
<dbReference type="Ensembl" id="ENSMUST00000214185.3">
    <molecule id="Q8C310-1"/>
    <property type="protein sequence ID" value="ENSMUSP00000150722.3"/>
    <property type="gene ID" value="ENSMUSG00000032125.22"/>
</dbReference>
<dbReference type="GeneID" id="74144"/>
<dbReference type="KEGG" id="mmu:74144"/>
<dbReference type="UCSC" id="uc009ous.1">
    <molecule id="Q8C310-2"/>
    <property type="organism name" value="mouse"/>
</dbReference>
<dbReference type="UCSC" id="uc012gqy.1">
    <molecule id="Q8C310-1"/>
    <property type="organism name" value="mouse"/>
</dbReference>
<dbReference type="AGR" id="MGI:1921394"/>
<dbReference type="CTD" id="54538"/>
<dbReference type="MGI" id="MGI:1921394">
    <property type="gene designation" value="Robo4"/>
</dbReference>
<dbReference type="VEuPathDB" id="HostDB:ENSMUSG00000032125"/>
<dbReference type="eggNOG" id="KOG4222">
    <property type="taxonomic scope" value="Eukaryota"/>
</dbReference>
<dbReference type="GeneTree" id="ENSGT00940000161382"/>
<dbReference type="InParanoid" id="Q8C310"/>
<dbReference type="PhylomeDB" id="Q8C310"/>
<dbReference type="TreeFam" id="TF351053"/>
<dbReference type="BioGRID-ORCS" id="74144">
    <property type="hits" value="1 hit in 76 CRISPR screens"/>
</dbReference>
<dbReference type="ChiTaRS" id="Robo4">
    <property type="organism name" value="mouse"/>
</dbReference>
<dbReference type="PRO" id="PR:Q8C310"/>
<dbReference type="Proteomes" id="UP000000589">
    <property type="component" value="Chromosome 9"/>
</dbReference>
<dbReference type="RNAct" id="Q8C310">
    <property type="molecule type" value="protein"/>
</dbReference>
<dbReference type="Bgee" id="ENSMUSG00000032125">
    <property type="expression patterns" value="Expressed in interventricular septum and 166 other cell types or tissues"/>
</dbReference>
<dbReference type="ExpressionAtlas" id="Q8C310">
    <property type="expression patterns" value="baseline and differential"/>
</dbReference>
<dbReference type="GO" id="GO:0009897">
    <property type="term" value="C:external side of plasma membrane"/>
    <property type="evidence" value="ECO:0000314"/>
    <property type="project" value="MGI"/>
</dbReference>
<dbReference type="GO" id="GO:0016020">
    <property type="term" value="C:membrane"/>
    <property type="evidence" value="ECO:0000304"/>
    <property type="project" value="MGI"/>
</dbReference>
<dbReference type="GO" id="GO:0038023">
    <property type="term" value="F:signaling receptor activity"/>
    <property type="evidence" value="ECO:0000314"/>
    <property type="project" value="MGI"/>
</dbReference>
<dbReference type="GO" id="GO:0001525">
    <property type="term" value="P:angiogenesis"/>
    <property type="evidence" value="ECO:0007669"/>
    <property type="project" value="UniProtKB-KW"/>
</dbReference>
<dbReference type="GO" id="GO:0043534">
    <property type="term" value="P:blood vessel endothelial cell migration"/>
    <property type="evidence" value="ECO:0000314"/>
    <property type="project" value="MGI"/>
</dbReference>
<dbReference type="GO" id="GO:0061028">
    <property type="term" value="P:establishment of endothelial barrier"/>
    <property type="evidence" value="ECO:0007669"/>
    <property type="project" value="Ensembl"/>
</dbReference>
<dbReference type="GO" id="GO:0043537">
    <property type="term" value="P:negative regulation of blood vessel endothelial cell migration"/>
    <property type="evidence" value="ECO:0000314"/>
    <property type="project" value="MGI"/>
</dbReference>
<dbReference type="CDD" id="cd00063">
    <property type="entry name" value="FN3"/>
    <property type="match status" value="1"/>
</dbReference>
<dbReference type="FunFam" id="2.60.40.10:FF:000840">
    <property type="entry name" value="Roundabout guidance receptor 4"/>
    <property type="match status" value="1"/>
</dbReference>
<dbReference type="FunFam" id="2.60.40.10:FF:000929">
    <property type="entry name" value="Roundabout guidance receptor 4"/>
    <property type="match status" value="1"/>
</dbReference>
<dbReference type="FunFam" id="2.60.40.10:FF:000844">
    <property type="entry name" value="roundabout homolog 4 isoform X1"/>
    <property type="match status" value="1"/>
</dbReference>
<dbReference type="Gene3D" id="2.60.40.10">
    <property type="entry name" value="Immunoglobulins"/>
    <property type="match status" value="4"/>
</dbReference>
<dbReference type="InterPro" id="IPR003961">
    <property type="entry name" value="FN3_dom"/>
</dbReference>
<dbReference type="InterPro" id="IPR036116">
    <property type="entry name" value="FN3_sf"/>
</dbReference>
<dbReference type="InterPro" id="IPR007110">
    <property type="entry name" value="Ig-like_dom"/>
</dbReference>
<dbReference type="InterPro" id="IPR036179">
    <property type="entry name" value="Ig-like_dom_sf"/>
</dbReference>
<dbReference type="InterPro" id="IPR013783">
    <property type="entry name" value="Ig-like_fold"/>
</dbReference>
<dbReference type="InterPro" id="IPR013098">
    <property type="entry name" value="Ig_I-set"/>
</dbReference>
<dbReference type="InterPro" id="IPR003599">
    <property type="entry name" value="Ig_sub"/>
</dbReference>
<dbReference type="InterPro" id="IPR003598">
    <property type="entry name" value="Ig_sub2"/>
</dbReference>
<dbReference type="PANTHER" id="PTHR10075">
    <property type="entry name" value="BASIGIN RELATED"/>
    <property type="match status" value="1"/>
</dbReference>
<dbReference type="PANTHER" id="PTHR10075:SF103">
    <property type="entry name" value="ROUNDABOUT HOMOLOG 4"/>
    <property type="match status" value="1"/>
</dbReference>
<dbReference type="Pfam" id="PF00041">
    <property type="entry name" value="fn3"/>
    <property type="match status" value="1"/>
</dbReference>
<dbReference type="Pfam" id="PF07679">
    <property type="entry name" value="I-set"/>
    <property type="match status" value="1"/>
</dbReference>
<dbReference type="Pfam" id="PF13927">
    <property type="entry name" value="Ig_3"/>
    <property type="match status" value="1"/>
</dbReference>
<dbReference type="SMART" id="SM00060">
    <property type="entry name" value="FN3"/>
    <property type="match status" value="2"/>
</dbReference>
<dbReference type="SMART" id="SM00409">
    <property type="entry name" value="IG"/>
    <property type="match status" value="2"/>
</dbReference>
<dbReference type="SMART" id="SM00408">
    <property type="entry name" value="IGc2"/>
    <property type="match status" value="2"/>
</dbReference>
<dbReference type="SUPFAM" id="SSF49265">
    <property type="entry name" value="Fibronectin type III"/>
    <property type="match status" value="1"/>
</dbReference>
<dbReference type="SUPFAM" id="SSF48726">
    <property type="entry name" value="Immunoglobulin"/>
    <property type="match status" value="2"/>
</dbReference>
<dbReference type="PROSITE" id="PS50853">
    <property type="entry name" value="FN3"/>
    <property type="match status" value="2"/>
</dbReference>
<dbReference type="PROSITE" id="PS50835">
    <property type="entry name" value="IG_LIKE"/>
    <property type="match status" value="2"/>
</dbReference>
<evidence type="ECO:0000250" key="1">
    <source>
        <dbReference type="UniProtKB" id="Q8WZ75"/>
    </source>
</evidence>
<evidence type="ECO:0000255" key="2"/>
<evidence type="ECO:0000255" key="3">
    <source>
        <dbReference type="PROSITE-ProRule" id="PRU00114"/>
    </source>
</evidence>
<evidence type="ECO:0000255" key="4">
    <source>
        <dbReference type="PROSITE-ProRule" id="PRU00316"/>
    </source>
</evidence>
<evidence type="ECO:0000256" key="5">
    <source>
        <dbReference type="SAM" id="MobiDB-lite"/>
    </source>
</evidence>
<evidence type="ECO:0000269" key="6">
    <source>
    </source>
</evidence>
<evidence type="ECO:0000269" key="7">
    <source>
    </source>
</evidence>
<evidence type="ECO:0000303" key="8">
    <source>
    </source>
</evidence>
<evidence type="ECO:0000303" key="9">
    <source>
    </source>
</evidence>
<evidence type="ECO:0000305" key="10"/>
<evidence type="ECO:0007744" key="11">
    <source>
    </source>
</evidence>
<protein>
    <recommendedName>
        <fullName>Roundabout homolog 4</fullName>
    </recommendedName>
</protein>